<evidence type="ECO:0000255" key="1">
    <source>
        <dbReference type="HAMAP-Rule" id="MF_01165"/>
    </source>
</evidence>
<feature type="chain" id="PRO_0000380026" description="Undecaprenyl phosphate-alpha-4-amino-4-deoxy-L-arabinose arabinosyl transferase">
    <location>
        <begin position="1"/>
        <end position="548"/>
    </location>
</feature>
<feature type="transmembrane region" description="Helical" evidence="1">
    <location>
        <begin position="9"/>
        <end position="29"/>
    </location>
</feature>
<feature type="transmembrane region" description="Helical" evidence="1">
    <location>
        <begin position="82"/>
        <end position="102"/>
    </location>
</feature>
<feature type="transmembrane region" description="Helical" evidence="1">
    <location>
        <begin position="114"/>
        <end position="134"/>
    </location>
</feature>
<feature type="transmembrane region" description="Helical" evidence="1">
    <location>
        <begin position="137"/>
        <end position="157"/>
    </location>
</feature>
<feature type="transmembrane region" description="Helical" evidence="1">
    <location>
        <begin position="163"/>
        <end position="185"/>
    </location>
</feature>
<feature type="transmembrane region" description="Helical" evidence="1">
    <location>
        <begin position="205"/>
        <end position="225"/>
    </location>
</feature>
<feature type="transmembrane region" description="Helical" evidence="1">
    <location>
        <begin position="256"/>
        <end position="276"/>
    </location>
</feature>
<feature type="transmembrane region" description="Helical" evidence="1">
    <location>
        <begin position="289"/>
        <end position="309"/>
    </location>
</feature>
<feature type="transmembrane region" description="Helical" evidence="1">
    <location>
        <begin position="311"/>
        <end position="331"/>
    </location>
</feature>
<feature type="transmembrane region" description="Helical" evidence="1">
    <location>
        <begin position="345"/>
        <end position="365"/>
    </location>
</feature>
<feature type="transmembrane region" description="Helical" evidence="1">
    <location>
        <begin position="381"/>
        <end position="401"/>
    </location>
</feature>
<feature type="transmembrane region" description="Helical" evidence="1">
    <location>
        <begin position="404"/>
        <end position="424"/>
    </location>
</feature>
<sequence>MMKSIRYYLAFAAFIALYYVIPVNSRLLWQPDETRYAEISREMLASGDWIVPHFLGLRYFEKPIAGYWINSLGQWLFGATNFGVRAGAILTTLLAAALVAWLTFRLWRDKRTALLASVIFLSLFAVYSIGTYAVLDPMIALWLTAGMCCFWQGMQATTRTGKIGMFLLLGATCGLGVLTKGFLALAVPVVSVLPWVIVQKRWKDFLLYGWLAVLSCFVVVLPWAIAIARREADFWHYFFWVEHIQRFAMSDAQHKAPFWYYLPVLLAGSLPWLGLLPGALKLGWRERNGAFYLLGWTIMPLLFFSIAKGKLPTYVLSCFAPIAILMARFVLHNVKEGVAALRVNGGINLVFGIIGIVAAFVVSSWGPLKSPVWTHIETYKVFCVWGVFTVWAFVGWYSLCHSQQYLLPAFCPLGLALLFGFSIPDRVMESKQPQFFVEMTQAPLASSRYILADNVGVAAGLAWSLKRDDIMLYGHAGELRYGLSYPDVQDKFVKADDFNAWLNQHRQEGIITLVLSIAKDEDISALSLPPADNVDYQGRLVLIQYRPK</sequence>
<keyword id="KW-0997">Cell inner membrane</keyword>
<keyword id="KW-1003">Cell membrane</keyword>
<keyword id="KW-0328">Glycosyltransferase</keyword>
<keyword id="KW-0441">Lipid A biosynthesis</keyword>
<keyword id="KW-0444">Lipid biosynthesis</keyword>
<keyword id="KW-0443">Lipid metabolism</keyword>
<keyword id="KW-0448">Lipopolysaccharide biosynthesis</keyword>
<keyword id="KW-0472">Membrane</keyword>
<keyword id="KW-0808">Transferase</keyword>
<keyword id="KW-0812">Transmembrane</keyword>
<keyword id="KW-1133">Transmembrane helix</keyword>
<reference key="1">
    <citation type="journal article" date="2011" name="J. Bacteriol.">
        <title>Comparative genomics of 28 Salmonella enterica isolates: evidence for CRISPR-mediated adaptive sublineage evolution.</title>
        <authorList>
            <person name="Fricke W.F."/>
            <person name="Mammel M.K."/>
            <person name="McDermott P.F."/>
            <person name="Tartera C."/>
            <person name="White D.G."/>
            <person name="Leclerc J.E."/>
            <person name="Ravel J."/>
            <person name="Cebula T.A."/>
        </authorList>
    </citation>
    <scope>NUCLEOTIDE SEQUENCE [LARGE SCALE GENOMIC DNA]</scope>
    <source>
        <strain>CT_02021853</strain>
    </source>
</reference>
<organism>
    <name type="scientific">Salmonella dublin (strain CT_02021853)</name>
    <dbReference type="NCBI Taxonomy" id="439851"/>
    <lineage>
        <taxon>Bacteria</taxon>
        <taxon>Pseudomonadati</taxon>
        <taxon>Pseudomonadota</taxon>
        <taxon>Gammaproteobacteria</taxon>
        <taxon>Enterobacterales</taxon>
        <taxon>Enterobacteriaceae</taxon>
        <taxon>Salmonella</taxon>
    </lineage>
</organism>
<accession>B5FNU1</accession>
<dbReference type="EC" id="2.4.2.43" evidence="1"/>
<dbReference type="EMBL" id="CP001144">
    <property type="protein sequence ID" value="ACH75472.1"/>
    <property type="molecule type" value="Genomic_DNA"/>
</dbReference>
<dbReference type="RefSeq" id="WP_000978052.1">
    <property type="nucleotide sequence ID" value="NC_011205.1"/>
</dbReference>
<dbReference type="SMR" id="B5FNU1"/>
<dbReference type="CAZy" id="GT83">
    <property type="family name" value="Glycosyltransferase Family 83"/>
</dbReference>
<dbReference type="KEGG" id="sed:SeD_A2645"/>
<dbReference type="HOGENOM" id="CLU_019200_2_1_6"/>
<dbReference type="UniPathway" id="UPA00037"/>
<dbReference type="Proteomes" id="UP000008322">
    <property type="component" value="Chromosome"/>
</dbReference>
<dbReference type="GO" id="GO:0005886">
    <property type="term" value="C:plasma membrane"/>
    <property type="evidence" value="ECO:0007669"/>
    <property type="project" value="UniProtKB-SubCell"/>
</dbReference>
<dbReference type="GO" id="GO:0103015">
    <property type="term" value="F:4-amino-4-deoxy-L-arabinose transferase activity"/>
    <property type="evidence" value="ECO:0007669"/>
    <property type="project" value="UniProtKB-EC"/>
</dbReference>
<dbReference type="GO" id="GO:0000030">
    <property type="term" value="F:mannosyltransferase activity"/>
    <property type="evidence" value="ECO:0007669"/>
    <property type="project" value="InterPro"/>
</dbReference>
<dbReference type="GO" id="GO:0009245">
    <property type="term" value="P:lipid A biosynthetic process"/>
    <property type="evidence" value="ECO:0007669"/>
    <property type="project" value="UniProtKB-UniRule"/>
</dbReference>
<dbReference type="GO" id="GO:0009103">
    <property type="term" value="P:lipopolysaccharide biosynthetic process"/>
    <property type="evidence" value="ECO:0007669"/>
    <property type="project" value="UniProtKB-KW"/>
</dbReference>
<dbReference type="GO" id="GO:0006493">
    <property type="term" value="P:protein O-linked glycosylation"/>
    <property type="evidence" value="ECO:0007669"/>
    <property type="project" value="InterPro"/>
</dbReference>
<dbReference type="GO" id="GO:0010041">
    <property type="term" value="P:response to iron(III) ion"/>
    <property type="evidence" value="ECO:0007669"/>
    <property type="project" value="TreeGrafter"/>
</dbReference>
<dbReference type="HAMAP" id="MF_01165">
    <property type="entry name" value="ArnT_transfer"/>
    <property type="match status" value="1"/>
</dbReference>
<dbReference type="InterPro" id="IPR022839">
    <property type="entry name" value="ArnT_tfrase"/>
</dbReference>
<dbReference type="InterPro" id="IPR003342">
    <property type="entry name" value="Glyco_trans_39/83"/>
</dbReference>
<dbReference type="InterPro" id="IPR050297">
    <property type="entry name" value="LipidA_mod_glycosyltrf_83"/>
</dbReference>
<dbReference type="NCBIfam" id="NF009784">
    <property type="entry name" value="PRK13279.1"/>
    <property type="match status" value="1"/>
</dbReference>
<dbReference type="PANTHER" id="PTHR33908">
    <property type="entry name" value="MANNOSYLTRANSFERASE YKCB-RELATED"/>
    <property type="match status" value="1"/>
</dbReference>
<dbReference type="PANTHER" id="PTHR33908:SF3">
    <property type="entry name" value="UNDECAPRENYL PHOSPHATE-ALPHA-4-AMINO-4-DEOXY-L-ARABINOSE ARABINOSYL TRANSFERASE"/>
    <property type="match status" value="1"/>
</dbReference>
<dbReference type="Pfam" id="PF02366">
    <property type="entry name" value="PMT"/>
    <property type="match status" value="1"/>
</dbReference>
<proteinExistence type="inferred from homology"/>
<name>ARNT_SALDC</name>
<protein>
    <recommendedName>
        <fullName evidence="1">Undecaprenyl phosphate-alpha-4-amino-4-deoxy-L-arabinose arabinosyl transferase</fullName>
        <ecNumber evidence="1">2.4.2.43</ecNumber>
    </recommendedName>
    <alternativeName>
        <fullName evidence="1">4-amino-4-deoxy-L-arabinose lipid A transferase</fullName>
    </alternativeName>
    <alternativeName>
        <fullName evidence="1">Lipid IV(A) 4-amino-4-deoxy-L-arabinosyltransferase</fullName>
    </alternativeName>
    <alternativeName>
        <fullName evidence="1">Undecaprenyl phosphate-alpha-L-Ara4N transferase</fullName>
    </alternativeName>
</protein>
<gene>
    <name evidence="1" type="primary">arnT</name>
    <name type="ordered locus">SeD_A2645</name>
</gene>
<comment type="function">
    <text evidence="1">Catalyzes the transfer of the L-Ara4N moiety of the glycolipid undecaprenyl phosphate-alpha-L-Ara4N to lipid A. The modified arabinose is attached to lipid A and is required for resistance to polymyxin and cationic antimicrobial peptides.</text>
</comment>
<comment type="catalytic activity">
    <reaction evidence="1">
        <text>4-amino-4-deoxy-alpha-L-arabinopyranosyl di-trans,octa-cis-undecaprenyl phosphate + lipid IVA = lipid IIA + di-trans,octa-cis-undecaprenyl phosphate.</text>
        <dbReference type="EC" id="2.4.2.43"/>
    </reaction>
</comment>
<comment type="pathway">
    <text evidence="1">Lipopolysaccharide metabolism; 4-amino-4-deoxy-beta-L-arabinose-lipid A biosynthesis.</text>
</comment>
<comment type="subcellular location">
    <subcellularLocation>
        <location evidence="1">Cell inner membrane</location>
        <topology evidence="1">Multi-pass membrane protein</topology>
    </subcellularLocation>
</comment>
<comment type="similarity">
    <text evidence="1">Belongs to the glycosyltransferase 83 family.</text>
</comment>